<gene>
    <name type="primary">parB</name>
    <name evidence="12" type="ordered locus">MXAN_7476</name>
</gene>
<keyword id="KW-0002">3D-structure</keyword>
<keyword id="KW-0159">Chromosome partition</keyword>
<keyword id="KW-0963">Cytoplasm</keyword>
<keyword id="KW-0238">DNA-binding</keyword>
<keyword id="KW-0378">Hydrolase</keyword>
<keyword id="KW-0547">Nucleotide-binding</keyword>
<keyword id="KW-1185">Reference proteome</keyword>
<organism>
    <name type="scientific">Myxococcus xanthus (strain DK1622)</name>
    <dbReference type="NCBI Taxonomy" id="246197"/>
    <lineage>
        <taxon>Bacteria</taxon>
        <taxon>Pseudomonadati</taxon>
        <taxon>Myxococcota</taxon>
        <taxon>Myxococcia</taxon>
        <taxon>Myxococcales</taxon>
        <taxon>Cystobacterineae</taxon>
        <taxon>Myxococcaceae</taxon>
        <taxon>Myxococcus</taxon>
    </lineage>
</organism>
<feature type="chain" id="PRO_0000460331" description="Chromosome-partitioning protein ParB">
    <location>
        <begin position="1"/>
        <end position="296"/>
    </location>
</feature>
<feature type="DNA-binding region" description="H-T-H motif" evidence="9">
    <location>
        <begin position="199"/>
        <end position="221"/>
    </location>
</feature>
<feature type="region of interest" description="ParB/Srx nucleotide-binding domain (NBD)" evidence="10 11">
    <location>
        <begin position="39"/>
        <end position="128"/>
    </location>
</feature>
<feature type="region of interest" description="parS-binding domain (PBD)" evidence="11">
    <location>
        <begin position="134"/>
        <end position="230"/>
    </location>
</feature>
<feature type="region of interest" description="Disordered" evidence="1">
    <location>
        <begin position="223"/>
        <end position="249"/>
    </location>
</feature>
<feature type="region of interest" description="C-terminal dimerization domain (CDD)" evidence="11">
    <location>
        <begin position="247"/>
        <end position="296"/>
    </location>
</feature>
<feature type="active site" description="Proton acceptor" evidence="11">
    <location>
        <position position="93"/>
    </location>
</feature>
<feature type="binding site" evidence="11 13">
    <location>
        <position position="52"/>
    </location>
    <ligand>
        <name>CTP</name>
        <dbReference type="ChEBI" id="CHEBI:37563"/>
    </ligand>
</feature>
<feature type="binding site" evidence="11 13 14 15">
    <location>
        <position position="54"/>
    </location>
    <ligand>
        <name>CTP</name>
        <dbReference type="ChEBI" id="CHEBI:37563"/>
    </ligand>
</feature>
<feature type="binding site" evidence="11 13 14">
    <location>
        <position position="68"/>
    </location>
    <ligand>
        <name>CTP</name>
        <dbReference type="ChEBI" id="CHEBI:37563"/>
    </ligand>
</feature>
<feature type="binding site" evidence="11 13 15">
    <location>
        <position position="73"/>
    </location>
    <ligand>
        <name>CTP</name>
        <dbReference type="ChEBI" id="CHEBI:37563"/>
    </ligand>
</feature>
<feature type="binding site" evidence="11 13 14 15">
    <location>
        <position position="75"/>
    </location>
    <ligand>
        <name>CTP</name>
        <dbReference type="ChEBI" id="CHEBI:37563"/>
    </ligand>
</feature>
<feature type="binding site" evidence="11 13 14 15">
    <location>
        <position position="76"/>
    </location>
    <ligand>
        <name>CTP</name>
        <dbReference type="ChEBI" id="CHEBI:37563"/>
    </ligand>
</feature>
<feature type="binding site" evidence="11 14">
    <location>
        <position position="92"/>
    </location>
    <ligand>
        <name>CTP</name>
        <dbReference type="ChEBI" id="CHEBI:37563"/>
    </ligand>
</feature>
<feature type="binding site" evidence="11 13 14">
    <location>
        <position position="93"/>
    </location>
    <ligand>
        <name>CTP</name>
        <dbReference type="ChEBI" id="CHEBI:37563"/>
    </ligand>
</feature>
<feature type="binding site" evidence="11 13 14 15">
    <location>
        <position position="94"/>
    </location>
    <ligand>
        <name>CTP</name>
        <dbReference type="ChEBI" id="CHEBI:37563"/>
    </ligand>
</feature>
<feature type="binding site" evidence="10 11 13 14 15">
    <location>
        <position position="95"/>
    </location>
    <ligand>
        <name>CTP</name>
        <dbReference type="ChEBI" id="CHEBI:37563"/>
    </ligand>
</feature>
<feature type="binding site" evidence="11 13 14 15">
    <location>
        <position position="126"/>
    </location>
    <ligand>
        <name>CTP</name>
        <dbReference type="ChEBI" id="CHEBI:37563"/>
    </ligand>
</feature>
<feature type="binding site" evidence="6 13 14 15">
    <location>
        <position position="126"/>
    </location>
    <ligand>
        <name>Mg(2+)</name>
        <dbReference type="ChEBI" id="CHEBI:18420"/>
    </ligand>
</feature>
<feature type="binding site" evidence="11 14">
    <location>
        <position position="127"/>
    </location>
    <ligand>
        <name>CTP</name>
        <dbReference type="ChEBI" id="CHEBI:37563"/>
    </ligand>
</feature>
<feature type="binding site" evidence="6 13 14 15">
    <location>
        <position position="127"/>
    </location>
    <ligand>
        <name>Mg(2+)</name>
        <dbReference type="ChEBI" id="CHEBI:18420"/>
    </ligand>
</feature>
<feature type="binding site" evidence="10 11 13 14 15">
    <location>
        <position position="130"/>
    </location>
    <ligand>
        <name>CTP</name>
        <dbReference type="ChEBI" id="CHEBI:37563"/>
    </ligand>
</feature>
<feature type="binding site" evidence="11 13 14 15">
    <location>
        <position position="131"/>
    </location>
    <ligand>
        <name>CTP</name>
        <dbReference type="ChEBI" id="CHEBI:37563"/>
    </ligand>
</feature>
<feature type="site" description="May stabilize catalytic product and decrease reverse reaction" evidence="11">
    <location>
        <position position="52"/>
    </location>
</feature>
<feature type="mutagenesis site" description="Greatly decreased CTPase activity in the presence of parS, still binds CTP and dimerizes, covers 175 kb segment of chromosomal DNA in vivo, forms larger than wild-type cellular patches, abnormal chromosome partitioning." evidence="6">
    <original>Q</original>
    <variation>A</variation>
    <location>
        <position position="52"/>
    </location>
</feature>
<feature type="mutagenesis site" description="Binds but does not hydrolyze CTP, does not accumulate on parS DNA." evidence="6">
    <original>R</original>
    <variation>A</variation>
    <location>
        <position position="54"/>
    </location>
</feature>
<feature type="mutagenesis site" description="Greatly decreased CTPase activity in the presence of parS, still binds CTP and dimerizes, covers 125 kb segment of chromosomal DNA in vivo, forms larger than wild-type cellular patches, abnormal chromosome partitioning." evidence="6">
    <original>E</original>
    <variation>A</variation>
    <location>
        <position position="93"/>
    </location>
</feature>
<feature type="mutagenesis site" description="Binds but does not hydrolyze CTP, does not accumulate on parS DNA." evidence="6">
    <original>R</original>
    <variation>A</variation>
    <location>
        <position position="94"/>
    </location>
</feature>
<feature type="mutagenesis site" description="No longer binds CTP-gamma-S, no CTPase activity with parS, ParB is dispersed in the cytoplasm, 83% of cells have chromosome segregation defects. Does not accumulate on parS DNA, does not accumulate on chromosomal DNA in vivo." evidence="4 6">
    <original>R</original>
    <variation>A</variation>
    <location>
        <position position="95"/>
    </location>
</feature>
<feature type="mutagenesis site" description="Still binds CTP-gamma-S, almost no CTPase activity with parS, ParB is dispersed in the cytoplasm with a few poor foci, 87% of cells have chromosome segregation defects. Does not accumulate on parS DNA." evidence="4 6">
    <original>E</original>
    <variation>A</variation>
    <location>
        <position position="126"/>
    </location>
</feature>
<feature type="mutagenesis site" description="Slightly reduced binding of CTP-gamma-S, no CTPase activity with parS, ParB is dispersed in the cytoplasm, 90% of cells have chromosome segregation defects. Does not accumulate on parS DNA." evidence="4 6">
    <original>N</original>
    <variation>A</variation>
    <location>
        <position position="127"/>
    </location>
</feature>
<feature type="mutagenesis site" description="No longer binds CTP-gamma-S, no CTPase activity with parS, ParB is dispersed in the cytoplasm, 79% of cells have chromosome segregation defects. Does not accumulate on parS DNA." evidence="4 6">
    <original>R</original>
    <variation>A</variation>
    <location>
        <position position="130"/>
    </location>
</feature>
<feature type="mutagenesis site" description="Does not accumulate on parS DNA, still binds CTP, dimerizes in presence of parS DNA, still has CTPase activity." evidence="6">
    <location>
        <begin position="247"/>
        <end position="296"/>
    </location>
</feature>
<feature type="strand" evidence="16">
    <location>
        <begin position="38"/>
        <end position="42"/>
    </location>
</feature>
<feature type="helix" evidence="16">
    <location>
        <begin position="43"/>
        <end position="45"/>
    </location>
</feature>
<feature type="helix" evidence="16">
    <location>
        <begin position="59"/>
        <end position="72"/>
    </location>
</feature>
<feature type="strand" evidence="16">
    <location>
        <begin position="78"/>
        <end position="83"/>
    </location>
</feature>
<feature type="strand" evidence="16">
    <location>
        <begin position="86"/>
        <end position="91"/>
    </location>
</feature>
<feature type="helix" evidence="16">
    <location>
        <begin position="93"/>
        <end position="101"/>
    </location>
</feature>
<feature type="strand" evidence="16">
    <location>
        <begin position="105"/>
        <end position="111"/>
    </location>
</feature>
<feature type="helix" evidence="16">
    <location>
        <begin position="116"/>
        <end position="128"/>
    </location>
</feature>
<feature type="helix" evidence="16">
    <location>
        <begin position="135"/>
        <end position="147"/>
    </location>
</feature>
<feature type="helix" evidence="16">
    <location>
        <begin position="153"/>
        <end position="160"/>
    </location>
</feature>
<feature type="helix" evidence="16">
    <location>
        <begin position="164"/>
        <end position="173"/>
    </location>
</feature>
<feature type="helix" evidence="16">
    <location>
        <begin position="178"/>
        <end position="185"/>
    </location>
</feature>
<feature type="helix" evidence="16">
    <location>
        <begin position="191"/>
        <end position="197"/>
    </location>
</feature>
<feature type="helix" evidence="16">
    <location>
        <begin position="203"/>
        <end position="215"/>
    </location>
</feature>
<feature type="helix" evidence="16">
    <location>
        <begin position="220"/>
        <end position="230"/>
    </location>
</feature>
<sequence>MVKADMQKRALGRGLSALIPQAGATGAGKGEQAPKAGVLKLPIESIHRDKDQPRTYFDEEKLKELSESIKAQGVLQPILVRKDGDGYRIIAGERRWRASQAAGLKEVPAIVRDVTEVQAFELALVENLQRADLNPIEEAEGYKRLVDEFKLTQEQVSVRVGKERSTVANALRLLALPTDVKGMVADGSLSMGHARALLGVPRLPELQNLAKQVADKKLSVRDTERLVQQSRSSGKKDAGKAAPKQSPQVKALVEELQRRLGTKVRLTERSPGKGTIEVDFFSYDDLDRLLKLLRKE</sequence>
<evidence type="ECO:0000256" key="1">
    <source>
        <dbReference type="SAM" id="MobiDB-lite"/>
    </source>
</evidence>
<evidence type="ECO:0000269" key="2">
    <source>
    </source>
</evidence>
<evidence type="ECO:0000269" key="3">
    <source>
    </source>
</evidence>
<evidence type="ECO:0000269" key="4">
    <source>
    </source>
</evidence>
<evidence type="ECO:0000269" key="5">
    <source>
    </source>
</evidence>
<evidence type="ECO:0000269" key="6">
    <source>
    </source>
</evidence>
<evidence type="ECO:0000303" key="7">
    <source>
    </source>
</evidence>
<evidence type="ECO:0000305" key="8"/>
<evidence type="ECO:0000305" key="9">
    <source>
    </source>
</evidence>
<evidence type="ECO:0000305" key="10">
    <source>
    </source>
</evidence>
<evidence type="ECO:0000305" key="11">
    <source>
    </source>
</evidence>
<evidence type="ECO:0000312" key="12">
    <source>
        <dbReference type="EMBL" id="ABF91197.1"/>
    </source>
</evidence>
<evidence type="ECO:0007744" key="13">
    <source>
        <dbReference type="PDB" id="7BNK"/>
    </source>
</evidence>
<evidence type="ECO:0007744" key="14">
    <source>
        <dbReference type="PDB" id="7BNR"/>
    </source>
</evidence>
<evidence type="ECO:0007744" key="15">
    <source>
        <dbReference type="PDB" id="7O0N"/>
    </source>
</evidence>
<evidence type="ECO:0007829" key="16">
    <source>
        <dbReference type="PDB" id="7BNR"/>
    </source>
</evidence>
<proteinExistence type="evidence at protein level"/>
<name>PARB_MYXXD</name>
<dbReference type="EMBL" id="CP000113">
    <property type="protein sequence ID" value="ABF91197.1"/>
    <property type="molecule type" value="Genomic_DNA"/>
</dbReference>
<dbReference type="RefSeq" id="WP_011557382.1">
    <property type="nucleotide sequence ID" value="NC_008095.1"/>
</dbReference>
<dbReference type="PDB" id="7BNK">
    <property type="method" value="X-ray"/>
    <property type="resolution" value="1.90 A"/>
    <property type="chains" value="A/B=35-246"/>
</dbReference>
<dbReference type="PDB" id="7BNR">
    <property type="method" value="X-ray"/>
    <property type="resolution" value="1.70 A"/>
    <property type="chains" value="A/B=37-231"/>
</dbReference>
<dbReference type="PDB" id="7O0N">
    <property type="method" value="X-ray"/>
    <property type="resolution" value="1.89 A"/>
    <property type="chains" value="A/B=35-246"/>
</dbReference>
<dbReference type="PDBsum" id="7BNK"/>
<dbReference type="PDBsum" id="7BNR"/>
<dbReference type="PDBsum" id="7O0N"/>
<dbReference type="SMR" id="Q1CVJ4"/>
<dbReference type="STRING" id="246197.MXAN_7476"/>
<dbReference type="EnsemblBacteria" id="ABF91197">
    <property type="protein sequence ID" value="ABF91197"/>
    <property type="gene ID" value="MXAN_7476"/>
</dbReference>
<dbReference type="GeneID" id="41364621"/>
<dbReference type="KEGG" id="mxa:MXAN_7476"/>
<dbReference type="eggNOG" id="COG1475">
    <property type="taxonomic scope" value="Bacteria"/>
</dbReference>
<dbReference type="HOGENOM" id="CLU_023853_0_0_7"/>
<dbReference type="OrthoDB" id="9802051at2"/>
<dbReference type="Proteomes" id="UP000002402">
    <property type="component" value="Chromosome"/>
</dbReference>
<dbReference type="GO" id="GO:0005694">
    <property type="term" value="C:chromosome"/>
    <property type="evidence" value="ECO:0007669"/>
    <property type="project" value="TreeGrafter"/>
</dbReference>
<dbReference type="GO" id="GO:0005737">
    <property type="term" value="C:cytoplasm"/>
    <property type="evidence" value="ECO:0007669"/>
    <property type="project" value="UniProtKB-SubCell"/>
</dbReference>
<dbReference type="GO" id="GO:0003677">
    <property type="term" value="F:DNA binding"/>
    <property type="evidence" value="ECO:0007669"/>
    <property type="project" value="UniProtKB-KW"/>
</dbReference>
<dbReference type="GO" id="GO:0016787">
    <property type="term" value="F:hydrolase activity"/>
    <property type="evidence" value="ECO:0007669"/>
    <property type="project" value="UniProtKB-KW"/>
</dbReference>
<dbReference type="GO" id="GO:0000166">
    <property type="term" value="F:nucleotide binding"/>
    <property type="evidence" value="ECO:0007669"/>
    <property type="project" value="UniProtKB-KW"/>
</dbReference>
<dbReference type="GO" id="GO:0007059">
    <property type="term" value="P:chromosome segregation"/>
    <property type="evidence" value="ECO:0007669"/>
    <property type="project" value="UniProtKB-KW"/>
</dbReference>
<dbReference type="GO" id="GO:0045881">
    <property type="term" value="P:positive regulation of sporulation resulting in formation of a cellular spore"/>
    <property type="evidence" value="ECO:0007669"/>
    <property type="project" value="TreeGrafter"/>
</dbReference>
<dbReference type="CDD" id="cd16393">
    <property type="entry name" value="SPO0J_N"/>
    <property type="match status" value="1"/>
</dbReference>
<dbReference type="FunFam" id="1.10.10.2830:FF:000001">
    <property type="entry name" value="Chromosome partitioning protein ParB"/>
    <property type="match status" value="1"/>
</dbReference>
<dbReference type="FunFam" id="3.90.1530.30:FF:000001">
    <property type="entry name" value="Chromosome partitioning protein ParB"/>
    <property type="match status" value="1"/>
</dbReference>
<dbReference type="Gene3D" id="1.10.10.2830">
    <property type="match status" value="1"/>
</dbReference>
<dbReference type="Gene3D" id="3.90.1530.30">
    <property type="match status" value="1"/>
</dbReference>
<dbReference type="InterPro" id="IPR050336">
    <property type="entry name" value="Chromosome_partition/occlusion"/>
</dbReference>
<dbReference type="InterPro" id="IPR041468">
    <property type="entry name" value="HTH_ParB/Spo0J"/>
</dbReference>
<dbReference type="InterPro" id="IPR004437">
    <property type="entry name" value="ParB/RepB/Spo0J"/>
</dbReference>
<dbReference type="InterPro" id="IPR003115">
    <property type="entry name" value="ParB/Sulfiredoxin_dom"/>
</dbReference>
<dbReference type="InterPro" id="IPR036086">
    <property type="entry name" value="ParB/Sulfiredoxin_sf"/>
</dbReference>
<dbReference type="InterPro" id="IPR057240">
    <property type="entry name" value="ParB_dimer_C"/>
</dbReference>
<dbReference type="NCBIfam" id="TIGR00180">
    <property type="entry name" value="parB_part"/>
    <property type="match status" value="1"/>
</dbReference>
<dbReference type="PANTHER" id="PTHR33375">
    <property type="entry name" value="CHROMOSOME-PARTITIONING PROTEIN PARB-RELATED"/>
    <property type="match status" value="1"/>
</dbReference>
<dbReference type="PANTHER" id="PTHR33375:SF1">
    <property type="entry name" value="CHROMOSOME-PARTITIONING PROTEIN PARB-RELATED"/>
    <property type="match status" value="1"/>
</dbReference>
<dbReference type="Pfam" id="PF17762">
    <property type="entry name" value="HTH_ParB"/>
    <property type="match status" value="1"/>
</dbReference>
<dbReference type="Pfam" id="PF23552">
    <property type="entry name" value="ParB_dimer"/>
    <property type="match status" value="1"/>
</dbReference>
<dbReference type="Pfam" id="PF02195">
    <property type="entry name" value="ParBc"/>
    <property type="match status" value="1"/>
</dbReference>
<dbReference type="SMART" id="SM00470">
    <property type="entry name" value="ParB"/>
    <property type="match status" value="1"/>
</dbReference>
<dbReference type="SUPFAM" id="SSF109709">
    <property type="entry name" value="KorB DNA-binding domain-like"/>
    <property type="match status" value="1"/>
</dbReference>
<dbReference type="SUPFAM" id="SSF110849">
    <property type="entry name" value="ParB/Sulfiredoxin"/>
    <property type="match status" value="1"/>
</dbReference>
<accession>Q1CVJ4</accession>
<reference evidence="12" key="1">
    <citation type="journal article" date="2006" name="Proc. Natl. Acad. Sci. U.S.A.">
        <title>Evolution of sensory complexity recorded in a myxobacterial genome.</title>
        <authorList>
            <person name="Goldman B.S."/>
            <person name="Nierman W.C."/>
            <person name="Kaiser D."/>
            <person name="Slater S.C."/>
            <person name="Durkin A.S."/>
            <person name="Eisen J.A."/>
            <person name="Ronning C.M."/>
            <person name="Barbazuk W.B."/>
            <person name="Blanchard M."/>
            <person name="Field C."/>
            <person name="Halling C."/>
            <person name="Hinkle G."/>
            <person name="Iartchuk O."/>
            <person name="Kim H.S."/>
            <person name="Mackenzie C."/>
            <person name="Madupu R."/>
            <person name="Miller N."/>
            <person name="Shvartsbeyn A."/>
            <person name="Sullivan S.A."/>
            <person name="Vaudin M."/>
            <person name="Wiegand R."/>
            <person name="Kaplan H.B."/>
        </authorList>
    </citation>
    <scope>NUCLEOTIDE SEQUENCE [LARGE SCALE GENOMIC DNA]</scope>
    <source>
        <strain>DK1622</strain>
    </source>
</reference>
<reference key="2">
    <citation type="journal article" date="2014" name="PLoS ONE">
        <title>ParABS system in chromosome partitioning in the bacterium Myxococcus xanthus.</title>
        <authorList>
            <person name="Iniesta A.A."/>
        </authorList>
    </citation>
    <scope>BINDING TO PARS DNA</scope>
    <scope>SUBCELLULAR LOCATION</scope>
    <scope>DISRUPTION PHENOTYPE</scope>
    <source>
        <strain>DK1050</strain>
        <strain>DK1622</strain>
    </source>
</reference>
<reference key="3">
    <citation type="journal article" date="2017" name="Nat. Commun.">
        <title>Bactofilin-mediated organization of the ParABS chromosome segregation system in Myxococcus xanthus.</title>
        <authorList>
            <person name="Lin L."/>
            <person name="Osorio Valeriano M."/>
            <person name="Harms A."/>
            <person name="Soegaard-Andersen L."/>
            <person name="Thanbichler M."/>
        </authorList>
    </citation>
    <scope>SUBCELLULAR LOCATION</scope>
    <source>
        <strain>DK1622</strain>
    </source>
</reference>
<reference key="4">
    <citation type="journal article" date="2019" name="Cell">
        <title>ParB-type DNA Segregation Proteins Are CTP-Dependent Molecular Switches.</title>
        <authorList>
            <person name="Osorio-Valeriano M."/>
            <person name="Altegoer F."/>
            <person name="Steinchen W."/>
            <person name="Urban S."/>
            <person name="Liu Y."/>
            <person name="Bange G."/>
            <person name="Thanbichler M."/>
        </authorList>
    </citation>
    <scope>FUNCTION</scope>
    <scope>CATALYTIC ACTIVITY</scope>
    <scope>ACTIVITY REGULATION</scope>
    <scope>CTP-BINDING</scope>
    <scope>DNA-BINDING</scope>
    <scope>PROBABLE HOMODIMER</scope>
    <scope>SUBCELLULAR LOCATION</scope>
    <scope>MUTAGENESIS OF ARG-95; GLU-126; ASN-127 AND ARG-130</scope>
    <source>
        <strain>DK1622</strain>
    </source>
</reference>
<reference key="5">
    <citation type="journal article" date="2020" name="Mol. Microbiol.">
        <title>SMC and the bactofilin/PadC scaffold have distinct yet redundant functions in chromosome segregation and organization in Myxococcus xanthus.</title>
        <authorList>
            <person name="Anand D."/>
            <person name="Schumacher D."/>
            <person name="Soegaard-Andersen L."/>
        </authorList>
    </citation>
    <scope>FUNCTION</scope>
    <scope>SUBCELLULAR LOCATION</scope>
    <scope>DEVELOPMENTAL STAGE</scope>
    <scope>DISRUPTION PHENOTYPE</scope>
    <source>
        <strain>DK1622</strain>
    </source>
</reference>
<reference evidence="13 14 15" key="6">
    <citation type="journal article" date="2021" name="Mol. Cell">
        <title>The CTPase activity of ParB determines the size and dynamics of prokaryotic DNA partition complexes.</title>
        <authorList>
            <person name="Osorio-Valeriano M."/>
            <person name="Altegoer F."/>
            <person name="Das C.K."/>
            <person name="Steinchen W."/>
            <person name="Panis G."/>
            <person name="Connolley L."/>
            <person name="Giacomelli G."/>
            <person name="Feddersen H."/>
            <person name="Corrales-Guerrero L."/>
            <person name="Giammarinaro P.I."/>
            <person name="Hanssmann J."/>
            <person name="Bramkamp M."/>
            <person name="Viollier P.H."/>
            <person name="Murray S."/>
            <person name="Schafer L.V."/>
            <person name="Bange G."/>
            <person name="Thanbichler M."/>
        </authorList>
    </citation>
    <scope>X-RAY CRYSTALLOGRAPHY (1.70 ANGSTROMS) OF 37-231 IN COMPLEX WITH CDP AND MG(2+)</scope>
    <scope>CTP-BINDING</scope>
    <scope>FUNCTION</scope>
    <scope>CATALYTIC ACTIVITY</scope>
    <scope>PROBABLE ACTIVE SITE</scope>
    <scope>SUBUNIT</scope>
    <scope>SUBCELLULAR LOCATION</scope>
    <scope>DOMAIN</scope>
    <scope>MUTAGENESIS OF GLN-52; ARG-54; GLU-93; ARG-94; ARG-95; GLU-126; ASN-127; ARG-130 AND 247-PRO--GLU-296</scope>
    <source>
        <strain>DK1622</strain>
    </source>
</reference>
<protein>
    <recommendedName>
        <fullName>Chromosome-partitioning protein ParB</fullName>
    </recommendedName>
    <alternativeName>
        <fullName evidence="7">CTP-dependent DNA-sliding clamp</fullName>
    </alternativeName>
</protein>
<comment type="function">
    <text evidence="2 4 5 6">An essential component of the chromosome segregation machinery (PubMed:24466283). The ParABS system segregates newly replicated chromosomes during bacterial cell division. After DNA replication the ParB-parS partition complexes interact with ParA ATPase, promoting the movement of the origin region towards opposite cell poles (Probable). Binds DNA close to the origin of replication (the parS cluster) (PubMed:24466283). parS sequences (but not a mutated parS sequence) stimulate CTP hydrolysis by ParB (PubMed:31835030, PubMed:34562373). Upon DNA and CTP binding forms a closed sliding rings that spread one-dimensionally over about 33 kb of DNA centered on the parS cluster (PubMed:34562373). CTP hydrolysis opens the ring, allowing DNA release and dissociation of ParB (PubMed:34562373). CTP hydrolysis appears to serve as a timing mechanism for ParB sliding rings; slower hydrolysis leads to larger ring spreading (PubMed:34562373). ParB dimers are dynamic and exchange rapidly in the cell (PubMed:34562373). Mutants that have decreased CTPase activity accumulate over a greater spread of DNA and form abnormal cellular foci (PubMed:34562373). Does not hydrolyze ATP, GTP or UTP (PubMed:31835030). Binds CTP via its ParB/Srx domain (PubMed:31835030, PubMed:34562373). Required for Smc to stably accumulate (PubMed:32738827).</text>
</comment>
<comment type="catalytic activity">
    <reaction evidence="4 6">
        <text>CTP + H2O = CDP + phosphate + H(+)</text>
        <dbReference type="Rhea" id="RHEA:29387"/>
        <dbReference type="ChEBI" id="CHEBI:15377"/>
        <dbReference type="ChEBI" id="CHEBI:15378"/>
        <dbReference type="ChEBI" id="CHEBI:37563"/>
        <dbReference type="ChEBI" id="CHEBI:43474"/>
        <dbReference type="ChEBI" id="CHEBI:58069"/>
    </reaction>
</comment>
<comment type="activity regulation">
    <text evidence="4">CTPase activity is stimulated by parS DNA (PubMed:31835030).</text>
</comment>
<comment type="subunit">
    <text evidence="10 11">Homodimer (Probable) (PubMed:31835030, PubMed:34562373). Forms a loose homodimer, binding of parS DNA and CTP cause conformational changes including formation of a tighter dimer, and closes a clamp around the DNA (PubMed:34562373).</text>
</comment>
<comment type="subcellular location">
    <subcellularLocation>
        <location evidence="2 3 4 5 6">Cytoplasm</location>
    </subcellularLocation>
    <text evidence="2 3 4 6">Located in 1-2 small subpolar patches (PubMed:24466283, PubMed:29180656, PubMed:31835030, PubMed:34562373). Patches colocalize with ParA (PubMed:24466283, PubMed:29180656, PubMed:31835030) and with bactofilin BacNOP patches (PubMed:29180656, PubMed:31835030).</text>
</comment>
<comment type="developmental stage">
    <text evidence="5">In newly divided cells only 1 subpolar ParB patch is visible; by 20 minutes (at 25 or 32 degrees Celsius) it has duplicated and takes on average 30/20 minutes (at 25 or 32 degrees Celsius respectively) to migrate to the opposite subpolar region where remains stably (PubMed:32738827).</text>
</comment>
<comment type="domain">
    <text evidence="6 10 11">Has 3 domains, the ParB/Srx nucleotide-binding domain (NBD), parS-binding domain (PBD) and the C-terminal dimerization domain (CDD) (Probable) (PubMed:31835030, PubMed:34562373). Forms loose dimers via the CDD; in the presence of parS-containing DNA and CTP forms a closed ring around the DNA (PubMed:34562373). In complex with CTP part of the NBD exchanges into the other monomer, forming a tightly interlinked domain with 2 CTP nucleotides shared between the 2 subunits (PubMed:34562373).</text>
</comment>
<comment type="disruption phenotype">
    <text evidence="2 5">Essential, it cannot be deleted; depletion experiments lead to abnormal morphology, chromosome segregation anomalies and cell death (PubMed:24466283). As ParB is depleted Smc levels drop, suggesting ParB is important for Smc stability (PubMed:32738827).</text>
</comment>
<comment type="similarity">
    <text evidence="8">Belongs to the ParB family.</text>
</comment>